<accession>Q8CWS9</accession>
<proteinExistence type="inferred from homology"/>
<dbReference type="EMBL" id="AE007317">
    <property type="protein sequence ID" value="AAK99359.1"/>
    <property type="molecule type" value="Genomic_DNA"/>
</dbReference>
<dbReference type="PIR" id="C97941">
    <property type="entry name" value="C97941"/>
</dbReference>
<dbReference type="RefSeq" id="NP_358149.1">
    <property type="nucleotide sequence ID" value="NC_003098.1"/>
</dbReference>
<dbReference type="RefSeq" id="WP_001085809.1">
    <property type="nucleotide sequence ID" value="NC_003098.1"/>
</dbReference>
<dbReference type="SMR" id="Q8CWS9"/>
<dbReference type="STRING" id="171101.spr0555"/>
<dbReference type="GeneID" id="93739230"/>
<dbReference type="KEGG" id="spr:spr0555"/>
<dbReference type="PATRIC" id="fig|171101.6.peg.614"/>
<dbReference type="eggNOG" id="COG0080">
    <property type="taxonomic scope" value="Bacteria"/>
</dbReference>
<dbReference type="HOGENOM" id="CLU_074237_2_1_9"/>
<dbReference type="PRO" id="PR:Q8CWS9"/>
<dbReference type="Proteomes" id="UP000000586">
    <property type="component" value="Chromosome"/>
</dbReference>
<dbReference type="GO" id="GO:0022625">
    <property type="term" value="C:cytosolic large ribosomal subunit"/>
    <property type="evidence" value="ECO:0000318"/>
    <property type="project" value="GO_Central"/>
</dbReference>
<dbReference type="GO" id="GO:0070180">
    <property type="term" value="F:large ribosomal subunit rRNA binding"/>
    <property type="evidence" value="ECO:0000318"/>
    <property type="project" value="GO_Central"/>
</dbReference>
<dbReference type="GO" id="GO:0003735">
    <property type="term" value="F:structural constituent of ribosome"/>
    <property type="evidence" value="ECO:0000318"/>
    <property type="project" value="GO_Central"/>
</dbReference>
<dbReference type="GO" id="GO:0006412">
    <property type="term" value="P:translation"/>
    <property type="evidence" value="ECO:0000318"/>
    <property type="project" value="GO_Central"/>
</dbReference>
<dbReference type="CDD" id="cd00349">
    <property type="entry name" value="Ribosomal_L11"/>
    <property type="match status" value="1"/>
</dbReference>
<dbReference type="FunFam" id="1.10.10.250:FF:000001">
    <property type="entry name" value="50S ribosomal protein L11"/>
    <property type="match status" value="1"/>
</dbReference>
<dbReference type="FunFam" id="3.30.1550.10:FF:000001">
    <property type="entry name" value="50S ribosomal protein L11"/>
    <property type="match status" value="1"/>
</dbReference>
<dbReference type="Gene3D" id="1.10.10.250">
    <property type="entry name" value="Ribosomal protein L11, C-terminal domain"/>
    <property type="match status" value="1"/>
</dbReference>
<dbReference type="Gene3D" id="3.30.1550.10">
    <property type="entry name" value="Ribosomal protein L11/L12, N-terminal domain"/>
    <property type="match status" value="1"/>
</dbReference>
<dbReference type="HAMAP" id="MF_00736">
    <property type="entry name" value="Ribosomal_uL11"/>
    <property type="match status" value="1"/>
</dbReference>
<dbReference type="InterPro" id="IPR000911">
    <property type="entry name" value="Ribosomal_uL11"/>
</dbReference>
<dbReference type="InterPro" id="IPR006519">
    <property type="entry name" value="Ribosomal_uL11_bac-typ"/>
</dbReference>
<dbReference type="InterPro" id="IPR020783">
    <property type="entry name" value="Ribosomal_uL11_C"/>
</dbReference>
<dbReference type="InterPro" id="IPR036769">
    <property type="entry name" value="Ribosomal_uL11_C_sf"/>
</dbReference>
<dbReference type="InterPro" id="IPR020785">
    <property type="entry name" value="Ribosomal_uL11_CS"/>
</dbReference>
<dbReference type="InterPro" id="IPR020784">
    <property type="entry name" value="Ribosomal_uL11_N"/>
</dbReference>
<dbReference type="InterPro" id="IPR036796">
    <property type="entry name" value="Ribosomal_uL11_N_sf"/>
</dbReference>
<dbReference type="NCBIfam" id="TIGR01632">
    <property type="entry name" value="L11_bact"/>
    <property type="match status" value="1"/>
</dbReference>
<dbReference type="PANTHER" id="PTHR11661">
    <property type="entry name" value="60S RIBOSOMAL PROTEIN L12"/>
    <property type="match status" value="1"/>
</dbReference>
<dbReference type="PANTHER" id="PTHR11661:SF1">
    <property type="entry name" value="LARGE RIBOSOMAL SUBUNIT PROTEIN UL11M"/>
    <property type="match status" value="1"/>
</dbReference>
<dbReference type="Pfam" id="PF00298">
    <property type="entry name" value="Ribosomal_L11"/>
    <property type="match status" value="1"/>
</dbReference>
<dbReference type="Pfam" id="PF03946">
    <property type="entry name" value="Ribosomal_L11_N"/>
    <property type="match status" value="1"/>
</dbReference>
<dbReference type="SMART" id="SM00649">
    <property type="entry name" value="RL11"/>
    <property type="match status" value="1"/>
</dbReference>
<dbReference type="SUPFAM" id="SSF54747">
    <property type="entry name" value="Ribosomal L11/L12e N-terminal domain"/>
    <property type="match status" value="1"/>
</dbReference>
<dbReference type="SUPFAM" id="SSF46906">
    <property type="entry name" value="Ribosomal protein L11, C-terminal domain"/>
    <property type="match status" value="1"/>
</dbReference>
<dbReference type="PROSITE" id="PS00359">
    <property type="entry name" value="RIBOSOMAL_L11"/>
    <property type="match status" value="1"/>
</dbReference>
<reference key="1">
    <citation type="journal article" date="2001" name="J. Bacteriol.">
        <title>Genome of the bacterium Streptococcus pneumoniae strain R6.</title>
        <authorList>
            <person name="Hoskins J."/>
            <person name="Alborn W.E. Jr."/>
            <person name="Arnold J."/>
            <person name="Blaszczak L.C."/>
            <person name="Burgett S."/>
            <person name="DeHoff B.S."/>
            <person name="Estrem S.T."/>
            <person name="Fritz L."/>
            <person name="Fu D.-J."/>
            <person name="Fuller W."/>
            <person name="Geringer C."/>
            <person name="Gilmour R."/>
            <person name="Glass J.S."/>
            <person name="Khoja H."/>
            <person name="Kraft A.R."/>
            <person name="Lagace R.E."/>
            <person name="LeBlanc D.J."/>
            <person name="Lee L.N."/>
            <person name="Lefkowitz E.J."/>
            <person name="Lu J."/>
            <person name="Matsushima P."/>
            <person name="McAhren S.M."/>
            <person name="McHenney M."/>
            <person name="McLeaster K."/>
            <person name="Mundy C.W."/>
            <person name="Nicas T.I."/>
            <person name="Norris F.H."/>
            <person name="O'Gara M."/>
            <person name="Peery R.B."/>
            <person name="Robertson G.T."/>
            <person name="Rockey P."/>
            <person name="Sun P.-M."/>
            <person name="Winkler M.E."/>
            <person name="Yang Y."/>
            <person name="Young-Bellido M."/>
            <person name="Zhao G."/>
            <person name="Zook C.A."/>
            <person name="Baltz R.H."/>
            <person name="Jaskunas S.R."/>
            <person name="Rosteck P.R. Jr."/>
            <person name="Skatrud P.L."/>
            <person name="Glass J.I."/>
        </authorList>
    </citation>
    <scope>NUCLEOTIDE SEQUENCE [LARGE SCALE GENOMIC DNA]</scope>
    <source>
        <strain>ATCC BAA-255 / R6</strain>
    </source>
</reference>
<protein>
    <recommendedName>
        <fullName evidence="1">Large ribosomal subunit protein uL11</fullName>
    </recommendedName>
    <alternativeName>
        <fullName evidence="2">50S ribosomal protein L11</fullName>
    </alternativeName>
</protein>
<comment type="function">
    <text evidence="1">Forms part of the ribosomal stalk which helps the ribosome interact with GTP-bound translation factors.</text>
</comment>
<comment type="subunit">
    <text evidence="1">Part of the ribosomal stalk of the 50S ribosomal subunit. Interacts with L10 and the large rRNA to form the base of the stalk. L10 forms an elongated spine to which L12 dimers bind in a sequential fashion forming a multimeric L10(L12)X complex.</text>
</comment>
<comment type="PTM">
    <text evidence="1">One or more lysine residues are methylated.</text>
</comment>
<comment type="similarity">
    <text evidence="1">Belongs to the universal ribosomal protein uL11 family.</text>
</comment>
<evidence type="ECO:0000255" key="1">
    <source>
        <dbReference type="HAMAP-Rule" id="MF_00736"/>
    </source>
</evidence>
<evidence type="ECO:0000305" key="2"/>
<sequence length="141" mass="14800">MAKKVEKLVKLQIPAGKATPAPPVGPALGQAGINIMGFTKEFNARTADQAGMIIPVVISVYEDKSFTFVTKTPPAAVLLKKAAGVEKGSGTPNKTKVATVTRAQVQEIAETKMPDLNAANVESAMRMIEGTARSMGFTVVD</sequence>
<gene>
    <name evidence="1" type="primary">rplK</name>
    <name type="ordered locus">spr0555</name>
</gene>
<name>RL11_STRR6</name>
<organism>
    <name type="scientific">Streptococcus pneumoniae (strain ATCC BAA-255 / R6)</name>
    <dbReference type="NCBI Taxonomy" id="171101"/>
    <lineage>
        <taxon>Bacteria</taxon>
        <taxon>Bacillati</taxon>
        <taxon>Bacillota</taxon>
        <taxon>Bacilli</taxon>
        <taxon>Lactobacillales</taxon>
        <taxon>Streptococcaceae</taxon>
        <taxon>Streptococcus</taxon>
    </lineage>
</organism>
<keyword id="KW-0488">Methylation</keyword>
<keyword id="KW-1185">Reference proteome</keyword>
<keyword id="KW-0687">Ribonucleoprotein</keyword>
<keyword id="KW-0689">Ribosomal protein</keyword>
<keyword id="KW-0694">RNA-binding</keyword>
<keyword id="KW-0699">rRNA-binding</keyword>
<feature type="chain" id="PRO_0000104384" description="Large ribosomal subunit protein uL11">
    <location>
        <begin position="1"/>
        <end position="141"/>
    </location>
</feature>